<dbReference type="EMBL" id="CP001233">
    <property type="protein sequence ID" value="ACP05009.1"/>
    <property type="molecule type" value="Genomic_DNA"/>
</dbReference>
<dbReference type="RefSeq" id="WP_000877206.1">
    <property type="nucleotide sequence ID" value="NC_012578.1"/>
</dbReference>
<dbReference type="SMR" id="C3LSY3"/>
<dbReference type="KEGG" id="vcm:VCM66_0688"/>
<dbReference type="HOGENOM" id="CLU_050555_3_1_6"/>
<dbReference type="Proteomes" id="UP000001217">
    <property type="component" value="Chromosome I"/>
</dbReference>
<dbReference type="GO" id="GO:0005737">
    <property type="term" value="C:cytoplasm"/>
    <property type="evidence" value="ECO:0007669"/>
    <property type="project" value="UniProtKB-SubCell"/>
</dbReference>
<dbReference type="GO" id="GO:0005507">
    <property type="term" value="F:copper ion binding"/>
    <property type="evidence" value="ECO:0007669"/>
    <property type="project" value="TreeGrafter"/>
</dbReference>
<dbReference type="FunFam" id="3.20.20.380:FF:000001">
    <property type="entry name" value="Copper homeostasis protein CutC"/>
    <property type="match status" value="1"/>
</dbReference>
<dbReference type="Gene3D" id="3.20.20.380">
    <property type="entry name" value="Copper homeostasis (CutC) domain"/>
    <property type="match status" value="1"/>
</dbReference>
<dbReference type="HAMAP" id="MF_00795">
    <property type="entry name" value="CutC"/>
    <property type="match status" value="1"/>
</dbReference>
<dbReference type="InterPro" id="IPR005627">
    <property type="entry name" value="CutC-like"/>
</dbReference>
<dbReference type="InterPro" id="IPR036822">
    <property type="entry name" value="CutC-like_dom_sf"/>
</dbReference>
<dbReference type="PANTHER" id="PTHR12598">
    <property type="entry name" value="COPPER HOMEOSTASIS PROTEIN CUTC"/>
    <property type="match status" value="1"/>
</dbReference>
<dbReference type="PANTHER" id="PTHR12598:SF0">
    <property type="entry name" value="COPPER HOMEOSTASIS PROTEIN CUTC HOMOLOG"/>
    <property type="match status" value="1"/>
</dbReference>
<dbReference type="Pfam" id="PF03932">
    <property type="entry name" value="CutC"/>
    <property type="match status" value="1"/>
</dbReference>
<dbReference type="SUPFAM" id="SSF110395">
    <property type="entry name" value="CutC-like"/>
    <property type="match status" value="1"/>
</dbReference>
<evidence type="ECO:0000255" key="1">
    <source>
        <dbReference type="HAMAP-Rule" id="MF_00795"/>
    </source>
</evidence>
<reference key="1">
    <citation type="journal article" date="2008" name="PLoS ONE">
        <title>A recalibrated molecular clock and independent origins for the cholera pandemic clones.</title>
        <authorList>
            <person name="Feng L."/>
            <person name="Reeves P.R."/>
            <person name="Lan R."/>
            <person name="Ren Y."/>
            <person name="Gao C."/>
            <person name="Zhou Z."/>
            <person name="Ren Y."/>
            <person name="Cheng J."/>
            <person name="Wang W."/>
            <person name="Wang J."/>
            <person name="Qian W."/>
            <person name="Li D."/>
            <person name="Wang L."/>
        </authorList>
    </citation>
    <scope>NUCLEOTIDE SEQUENCE [LARGE SCALE GENOMIC DNA]</scope>
    <source>
        <strain>M66-2</strain>
    </source>
</reference>
<sequence length="254" mass="27192">MKYQVEVCIDNIESLHNAIAGGATRIELCSSLALGGLTPSAGLMYSAGRVSPIPAYAMIRPREGDFFYHDDELSIMAQDIRTAHQANLQGVVLGLLNADGTIDVKRSKPLIELAHSLGLGVTFHRAFDHCVNPEHALEEIIALGCERILTSGLARNAYLGIERLAQLVKQSAGRISIMAGAGINAQNVAEIALATGVNELHLSAKTTRPSEMLFIRSESKMGAADCDDFIIPVTSRDALQQTVHALAALNSVLH</sequence>
<protein>
    <recommendedName>
        <fullName evidence="1">PF03932 family protein CutC</fullName>
    </recommendedName>
</protein>
<name>CUTC_VIBCM</name>
<feature type="chain" id="PRO_1000148518" description="PF03932 family protein CutC">
    <location>
        <begin position="1"/>
        <end position="254"/>
    </location>
</feature>
<gene>
    <name evidence="1" type="primary">cutC</name>
    <name type="ordered locus">VCM66_0688</name>
</gene>
<accession>C3LSY3</accession>
<proteinExistence type="inferred from homology"/>
<comment type="subcellular location">
    <subcellularLocation>
        <location evidence="1">Cytoplasm</location>
    </subcellularLocation>
</comment>
<comment type="similarity">
    <text evidence="1">Belongs to the CutC family.</text>
</comment>
<comment type="caution">
    <text evidence="1">Once thought to be involved in copper homeostasis, experiments in E.coli have shown this is not the case.</text>
</comment>
<organism>
    <name type="scientific">Vibrio cholerae serotype O1 (strain M66-2)</name>
    <dbReference type="NCBI Taxonomy" id="579112"/>
    <lineage>
        <taxon>Bacteria</taxon>
        <taxon>Pseudomonadati</taxon>
        <taxon>Pseudomonadota</taxon>
        <taxon>Gammaproteobacteria</taxon>
        <taxon>Vibrionales</taxon>
        <taxon>Vibrionaceae</taxon>
        <taxon>Vibrio</taxon>
    </lineage>
</organism>
<keyword id="KW-0963">Cytoplasm</keyword>